<accession>P09983</accession>
<proteinExistence type="evidence at protein level"/>
<keyword id="KW-0106">Calcium</keyword>
<keyword id="KW-0204">Cytolysis</keyword>
<keyword id="KW-0903">Direct protein sequencing</keyword>
<keyword id="KW-0354">Hemolysis</keyword>
<keyword id="KW-1032">Host cell membrane</keyword>
<keyword id="KW-1043">Host membrane</keyword>
<keyword id="KW-0449">Lipoprotein</keyword>
<keyword id="KW-0472">Membrane</keyword>
<keyword id="KW-0519">Myristate</keyword>
<keyword id="KW-0677">Repeat</keyword>
<keyword id="KW-0964">Secreted</keyword>
<keyword id="KW-0800">Toxin</keyword>
<keyword id="KW-0812">Transmembrane</keyword>
<keyword id="KW-1133">Transmembrane helix</keyword>
<keyword id="KW-0843">Virulence</keyword>
<dbReference type="EMBL" id="M10133">
    <property type="protein sequence ID" value="AAA23975.1"/>
    <property type="molecule type" value="Genomic_DNA"/>
</dbReference>
<dbReference type="EMBL" id="X02768">
    <property type="protein sequence ID" value="CAA26546.1"/>
    <property type="molecule type" value="Genomic_DNA"/>
</dbReference>
<dbReference type="PIR" id="A24433">
    <property type="entry name" value="LEECA"/>
</dbReference>
<dbReference type="PIR" id="S10056">
    <property type="entry name" value="S10056"/>
</dbReference>
<dbReference type="SMR" id="P09983"/>
<dbReference type="DIP" id="DIP-16932N"/>
<dbReference type="TCDB" id="1.C.11.1.3">
    <property type="family name" value="the pore-forming rtx toxin (rtx-toxin) family"/>
</dbReference>
<dbReference type="iPTMnet" id="P09983"/>
<dbReference type="PHI-base" id="PHI:7837"/>
<dbReference type="GO" id="GO:0005615">
    <property type="term" value="C:extracellular space"/>
    <property type="evidence" value="ECO:0000315"/>
    <property type="project" value="CAFA"/>
</dbReference>
<dbReference type="GO" id="GO:0020002">
    <property type="term" value="C:host cell plasma membrane"/>
    <property type="evidence" value="ECO:0007669"/>
    <property type="project" value="UniProtKB-SubCell"/>
</dbReference>
<dbReference type="GO" id="GO:0016020">
    <property type="term" value="C:membrane"/>
    <property type="evidence" value="ECO:0007669"/>
    <property type="project" value="UniProtKB-KW"/>
</dbReference>
<dbReference type="GO" id="GO:0005509">
    <property type="term" value="F:calcium ion binding"/>
    <property type="evidence" value="ECO:0007669"/>
    <property type="project" value="InterPro"/>
</dbReference>
<dbReference type="GO" id="GO:0015267">
    <property type="term" value="F:channel activity"/>
    <property type="evidence" value="ECO:0000314"/>
    <property type="project" value="UniProtKB"/>
</dbReference>
<dbReference type="GO" id="GO:0008289">
    <property type="term" value="F:lipid binding"/>
    <property type="evidence" value="ECO:0000269"/>
    <property type="project" value="DisProt"/>
</dbReference>
<dbReference type="GO" id="GO:0090729">
    <property type="term" value="F:toxin activity"/>
    <property type="evidence" value="ECO:0007669"/>
    <property type="project" value="UniProtKB-KW"/>
</dbReference>
<dbReference type="GO" id="GO:0044179">
    <property type="term" value="P:hemolysis in another organism"/>
    <property type="evidence" value="ECO:0000314"/>
    <property type="project" value="UniProtKB"/>
</dbReference>
<dbReference type="GO" id="GO:0030253">
    <property type="term" value="P:protein secretion by the type I secretion system"/>
    <property type="evidence" value="ECO:0000315"/>
    <property type="project" value="UniProtKB"/>
</dbReference>
<dbReference type="DisProt" id="DP00389"/>
<dbReference type="Gene3D" id="2.150.10.10">
    <property type="entry name" value="Serralysin-like metalloprotease, C-terminal"/>
    <property type="match status" value="3"/>
</dbReference>
<dbReference type="InterPro" id="IPR018511">
    <property type="entry name" value="Hemolysin-typ_Ca-bd_CS"/>
</dbReference>
<dbReference type="InterPro" id="IPR001343">
    <property type="entry name" value="Hemolysn_Ca-bd"/>
</dbReference>
<dbReference type="InterPro" id="IPR013550">
    <property type="entry name" value="RTX_C"/>
</dbReference>
<dbReference type="InterPro" id="IPR018504">
    <property type="entry name" value="RTX_pore_form"/>
</dbReference>
<dbReference type="InterPro" id="IPR050557">
    <property type="entry name" value="RTX_toxin/Mannuronan_C5-epim"/>
</dbReference>
<dbReference type="InterPro" id="IPR003995">
    <property type="entry name" value="RTX_toxin_determinant-A"/>
</dbReference>
<dbReference type="InterPro" id="IPR011049">
    <property type="entry name" value="Serralysin-like_metalloprot_C"/>
</dbReference>
<dbReference type="NCBIfam" id="NF033943">
    <property type="entry name" value="RTX_toxin"/>
    <property type="match status" value="1"/>
</dbReference>
<dbReference type="PANTHER" id="PTHR38340">
    <property type="entry name" value="S-LAYER PROTEIN"/>
    <property type="match status" value="1"/>
</dbReference>
<dbReference type="PANTHER" id="PTHR38340:SF1">
    <property type="entry name" value="S-LAYER PROTEIN"/>
    <property type="match status" value="1"/>
</dbReference>
<dbReference type="Pfam" id="PF00353">
    <property type="entry name" value="HemolysinCabind"/>
    <property type="match status" value="3"/>
</dbReference>
<dbReference type="Pfam" id="PF02382">
    <property type="entry name" value="RTX"/>
    <property type="match status" value="1"/>
</dbReference>
<dbReference type="Pfam" id="PF08339">
    <property type="entry name" value="RTX_C"/>
    <property type="match status" value="1"/>
</dbReference>
<dbReference type="PRINTS" id="PR00313">
    <property type="entry name" value="CABNDNGRPT"/>
</dbReference>
<dbReference type="PRINTS" id="PR01488">
    <property type="entry name" value="RTXTOXINA"/>
</dbReference>
<dbReference type="SUPFAM" id="SSF51120">
    <property type="entry name" value="beta-Roll"/>
    <property type="match status" value="2"/>
</dbReference>
<dbReference type="PROSITE" id="PS00330">
    <property type="entry name" value="HEMOLYSIN_CALCIUM"/>
    <property type="match status" value="4"/>
</dbReference>
<feature type="chain" id="PRO_0000196215" description="Hemolysin, chromosomal">
    <location>
        <begin position="1"/>
        <end position="1023"/>
    </location>
</feature>
<feature type="transmembrane region" description="Helical" evidence="2">
    <location>
        <begin position="237"/>
        <end position="259"/>
    </location>
</feature>
<feature type="transmembrane region" description="Helical" evidence="2">
    <location>
        <begin position="267"/>
        <end position="326"/>
    </location>
</feature>
<feature type="transmembrane region" description="Helical" evidence="2">
    <location>
        <begin position="364"/>
        <end position="410"/>
    </location>
</feature>
<feature type="repeat" description="Hemolysin-type calcium-binding 1">
    <location>
        <begin position="731"/>
        <end position="748"/>
    </location>
</feature>
<feature type="repeat" description="Hemolysin-type calcium-binding 2">
    <location>
        <begin position="749"/>
        <end position="766"/>
    </location>
</feature>
<feature type="repeat" description="Hemolysin-type calcium-binding 3">
    <location>
        <begin position="767"/>
        <end position="784"/>
    </location>
</feature>
<feature type="repeat" description="Hemolysin-type calcium-binding 4">
    <location>
        <begin position="785"/>
        <end position="802"/>
    </location>
</feature>
<feature type="repeat" description="Hemolysin-type calcium-binding 5">
    <location>
        <begin position="815"/>
        <end position="832"/>
    </location>
</feature>
<feature type="repeat" description="Hemolysin-type calcium-binding 6">
    <location>
        <begin position="833"/>
        <end position="850"/>
    </location>
</feature>
<feature type="region of interest" description="Disordered" evidence="3">
    <location>
        <begin position="747"/>
        <end position="780"/>
    </location>
</feature>
<feature type="compositionally biased region" description="Basic and acidic residues" evidence="3">
    <location>
        <begin position="747"/>
        <end position="763"/>
    </location>
</feature>
<feature type="lipid moiety-binding region" description="N6-myristoyl lysine" evidence="6 14">
    <location>
        <position position="563"/>
    </location>
</feature>
<feature type="lipid moiety-binding region" description="N6-myristoyl lysine" evidence="6 14">
    <location>
        <position position="689"/>
    </location>
</feature>
<feature type="sequence variant" description="In strain: 2001.">
    <original>A</original>
    <variation>T</variation>
    <location>
        <position position="6"/>
    </location>
</feature>
<evidence type="ECO:0000250" key="1">
    <source>
        <dbReference type="UniProtKB" id="P08715"/>
    </source>
</evidence>
<evidence type="ECO:0000255" key="2"/>
<evidence type="ECO:0000256" key="3">
    <source>
        <dbReference type="SAM" id="MobiDB-lite"/>
    </source>
</evidence>
<evidence type="ECO:0000269" key="4">
    <source>
    </source>
</evidence>
<evidence type="ECO:0000269" key="5">
    <source>
    </source>
</evidence>
<evidence type="ECO:0000269" key="6">
    <source>
    </source>
</evidence>
<evidence type="ECO:0000269" key="7">
    <source>
    </source>
</evidence>
<evidence type="ECO:0000269" key="8">
    <source>
    </source>
</evidence>
<evidence type="ECO:0000269" key="9">
    <source>
    </source>
</evidence>
<evidence type="ECO:0000303" key="10">
    <source>
    </source>
</evidence>
<evidence type="ECO:0000305" key="11"/>
<evidence type="ECO:0000305" key="12">
    <source>
    </source>
</evidence>
<evidence type="ECO:0000305" key="13">
    <source>
    </source>
</evidence>
<evidence type="ECO:0000305" key="14">
    <source>
    </source>
</evidence>
<sequence length="1023" mass="109867">MPTITAAQIKSTLQSAKQSAANKLHSAGQSTKDALKKAAEQTRNAGNRLILLIPKDYKGQGSSLNDLVRTADELGIEVQYDEKNGTAITKQVFGTAEKLIGLTERGVTIFAPQLDKLLQKYQKAGNKLGGSAENIGDNLGKAGSVLSTFQNFLGTALSSMKIDELIKKQKSGGNVSSSELAKASIELINQLVDTAASLNNVNSFSQQLNKLGSVLSNTKHLNGVGNKLQNLPNLDNIGAGLDTVSGILSAISASFILSNADADTGTKAAAGVELTTKVLGNVGKGISQYIIAQRAAQGLSTSAAAAGLIASVVTLAISPLSFLSIADKFKRANKIEEYSQRFKKLGYDGDSLLAAFHKETGAIDASLTRISTVLASVSSGISAAATTSLVGAPVSALVGAVTGIISGILEASKQAMFEHVASKMADVIAEWEKKHGKNYFENGYDARHAAFLEDNFKILSQYNKEYSVERSVLITQQHWDTLIGELAGVTRNGDKTLSGKSYIDYYEEGKRLEKKPDEFQKQVFDPLKGNIDLSDSKSSTLLKFVTPLLTPGEEIRERRQSGKYEYITELLVKGVDKWTVKGVQDKGSVYDYSNLIQHASVGNNQYREIRIESHLGDGDDKVFLSAGSANIYAGKGHDVVYYDKTDTGYLTIDGTKATEAGNYTVTRVLGGDVKVLQEVVKEQEVSVGKRTEKTQYRSYEFTHINGKNLTETDNLYSVEELIGTTRADKFFGSKFADIFHGADGDDHIEGNDGNDRLYGDKGNDTLSGGNGDDQLYGGDGNDKLIGGAGNNYLNGGDGDDELQVQGNSLAKNVLSGGKGNDKLYGSEGADLLDGGEGNDLLKGGYGNDIYRYLSGYGHHIIDDDGGKDDKLSLADIDFRDVAFRREGNDLIMYKAEGNVLSIGHKNGITFKNWFEKESGDISNHQIEQIFDKDGRVITPDSLKKALEYQQSNNKASYVYGNDALAYGSQGNLNPLINEISKIISAAGNFDVKEERAAASLLQLSGNASDFSYGRNSITLTASA</sequence>
<name>HLYAC_ECOLX</name>
<reference key="1">
    <citation type="journal article" date="1985" name="J. Bacteriol.">
        <title>Nucleotide sequence of an Escherichia coli chromosomal hemolysin.</title>
        <authorList>
            <person name="Felmlee T."/>
            <person name="Pellett S."/>
            <person name="Welch R.A."/>
        </authorList>
    </citation>
    <scope>NUCLEOTIDE SEQUENCE [GENOMIC DNA]</scope>
    <scope>FUNCTION</scope>
    <source>
        <strain>J96 / Serotype O4</strain>
    </source>
</reference>
<reference key="2">
    <citation type="journal article" date="1985" name="FEBS Lett.">
        <title>Characterisation of HlyC and mechanism of activation and secretion of haemolysin from E. coli 2001.</title>
        <authorList>
            <person name="Nicaud J.-M."/>
            <person name="Mackman N."/>
            <person name="Gray L."/>
            <person name="Holland I.B."/>
        </authorList>
    </citation>
    <scope>NUCLEOTIDE SEQUENCE [GENOMIC DNA] OF 1-44</scope>
    <scope>FUNCTION</scope>
    <scope>SUBCELLULAR LOCATION</scope>
    <source>
        <strain>2001</strain>
    </source>
</reference>
<reference key="3">
    <citation type="journal article" date="1994" name="Science">
        <title>Fatty acylation of two internal lysine residues required for the toxic activity of Escherichia coli hemolysin.</title>
        <authorList>
            <person name="Stanley P."/>
            <person name="Packman L.C."/>
            <person name="Koronakis V."/>
            <person name="Hughes C."/>
        </authorList>
    </citation>
    <scope>PROTEIN SEQUENCE OF 544-573 AND 682-693</scope>
    <scope>MYRISTOYLATION AT LYS-563 AND LYS-689</scope>
</reference>
<reference key="4">
    <citation type="journal article" date="1990" name="Infect. Immun.">
        <title>Effects of Escherichia coli hemolysin on endothelial cell function.</title>
        <authorList>
            <person name="Suttorp N."/>
            <person name="Floeer B."/>
            <person name="Schnittler H."/>
            <person name="Seeger W."/>
            <person name="Bhakdi S."/>
        </authorList>
    </citation>
    <scope>FUNCTION</scope>
    <scope>SUBCELLULAR LOCATION</scope>
</reference>
<reference key="5">
    <citation type="journal article" date="2003" name="Chem. Phys. Lipids">
        <title>Acyl chains are responsible for the irreversibility in the Escherichia coli alpha-hemolysin binding to membranes.</title>
        <authorList>
            <person name="Herlax V."/>
            <person name="Bakas L."/>
        </authorList>
    </citation>
    <scope>SUBCELLULAR LOCATION</scope>
    <scope>ACYLATION</scope>
</reference>
<reference key="6">
    <citation type="journal article" date="2020" name="J. Biol. Chem.">
        <title>Acyltransferase-mediated selection of the length of the fatty acyl chain and of the acylation site governs activation of bacterial RTX toxins.</title>
        <authorList>
            <person name="Osickova A."/>
            <person name="Khaliq H."/>
            <person name="Masin J."/>
            <person name="Jurnecka D."/>
            <person name="Sukova A."/>
            <person name="Fiser R."/>
            <person name="Holubova J."/>
            <person name="Stanek O."/>
            <person name="Sebo P."/>
            <person name="Osicka R."/>
        </authorList>
    </citation>
    <scope>MYRISTOYLATION AT LYS-563 AND LYS-689</scope>
</reference>
<organism>
    <name type="scientific">Escherichia coli</name>
    <dbReference type="NCBI Taxonomy" id="562"/>
    <lineage>
        <taxon>Bacteria</taxon>
        <taxon>Pseudomonadati</taxon>
        <taxon>Pseudomonadota</taxon>
        <taxon>Gammaproteobacteria</taxon>
        <taxon>Enterobacterales</taxon>
        <taxon>Enterobacteriaceae</taxon>
        <taxon>Escherichia</taxon>
    </lineage>
</organism>
<comment type="function">
    <text evidence="5 7 8">Bacterial hemolysins are exotoxins that attack blood cell membranes and cause cell rupture by forming a pore.</text>
</comment>
<comment type="subcellular location">
    <subcellularLocation>
        <location evidence="8">Secreted</location>
    </subcellularLocation>
    <subcellularLocation>
        <location evidence="12 13">Host cell membrane</location>
        <topology evidence="13">Multi-pass membrane protein</topology>
    </subcellularLocation>
</comment>
<comment type="domain">
    <text>The Gly-rich region is probably involved in binding calcium, which is required for target cell-binding or cytolytic activity.</text>
</comment>
<comment type="domain">
    <text evidence="13">The three transmembrane domains are involved in pore formation by the cytotoxin.</text>
</comment>
<comment type="PTM">
    <text evidence="1 4 6 9">Myristoylated by HlyC; the toxin only becomes active when modified (PubMed:12598051, PubMed:7801126). Mainly myristoylated, while a minor fraction is acylated with pentadecanoyl (C15:0; 26%) and heptadecanoyl (C17:0; 6%) fatty acyl groups (By similarity). Fatty acylation is involved in binding to host membranes and promotes the irreversible insertion of Hemolysin into the host cell membrane (PubMed:12598051). Can be activated by both myristoylation and palmitoylation, but HlyC catalyzes lysine myristoylation (PubMed:32461253).</text>
</comment>
<comment type="miscellaneous">
    <text evidence="11">The hemolysin of E.coli is produced predominantly by strains causing extraintestinal infections, such as those of the urinary tract.</text>
</comment>
<comment type="similarity">
    <text evidence="11">Belongs to the RTX prokaryotic toxin (TC 1.C.11) family.</text>
</comment>
<gene>
    <name evidence="10" type="primary">hlyA</name>
</gene>
<protein>
    <recommendedName>
        <fullName evidence="11">Hemolysin, chromosomal</fullName>
    </recommendedName>
</protein>